<gene>
    <name evidence="1" type="primary">hemH</name>
    <name type="ordered locus">Cyan7425_4517</name>
</gene>
<comment type="function">
    <text evidence="1">Catalyzes the ferrous insertion into protoporphyrin IX.</text>
</comment>
<comment type="catalytic activity">
    <reaction evidence="1">
        <text>heme b + 2 H(+) = protoporphyrin IX + Fe(2+)</text>
        <dbReference type="Rhea" id="RHEA:22584"/>
        <dbReference type="ChEBI" id="CHEBI:15378"/>
        <dbReference type="ChEBI" id="CHEBI:29033"/>
        <dbReference type="ChEBI" id="CHEBI:57306"/>
        <dbReference type="ChEBI" id="CHEBI:60344"/>
        <dbReference type="EC" id="4.98.1.1"/>
    </reaction>
</comment>
<comment type="pathway">
    <text evidence="1">Porphyrin-containing compound metabolism; protoheme biosynthesis; protoheme from protoporphyrin-IX: step 1/1.</text>
</comment>
<comment type="subcellular location">
    <subcellularLocation>
        <location evidence="1">Cytoplasm</location>
    </subcellularLocation>
</comment>
<comment type="similarity">
    <text evidence="1">Belongs to the ferrochelatase family.</text>
</comment>
<evidence type="ECO:0000255" key="1">
    <source>
        <dbReference type="HAMAP-Rule" id="MF_00323"/>
    </source>
</evidence>
<organism>
    <name type="scientific">Cyanothece sp. (strain PCC 7425 / ATCC 29141)</name>
    <dbReference type="NCBI Taxonomy" id="395961"/>
    <lineage>
        <taxon>Bacteria</taxon>
        <taxon>Bacillati</taxon>
        <taxon>Cyanobacteriota</taxon>
        <taxon>Cyanophyceae</taxon>
        <taxon>Gomontiellales</taxon>
        <taxon>Cyanothecaceae</taxon>
        <taxon>Cyanothece</taxon>
    </lineage>
</organism>
<reference key="1">
    <citation type="journal article" date="2011" name="MBio">
        <title>Novel metabolic attributes of the genus Cyanothece, comprising a group of unicellular nitrogen-fixing Cyanobacteria.</title>
        <authorList>
            <person name="Bandyopadhyay A."/>
            <person name="Elvitigala T."/>
            <person name="Welsh E."/>
            <person name="Stockel J."/>
            <person name="Liberton M."/>
            <person name="Min H."/>
            <person name="Sherman L.A."/>
            <person name="Pakrasi H.B."/>
        </authorList>
    </citation>
    <scope>NUCLEOTIDE SEQUENCE [LARGE SCALE GENOMIC DNA]</scope>
    <source>
        <strain>PCC 7425 / ATCC 29141</strain>
    </source>
</reference>
<protein>
    <recommendedName>
        <fullName evidence="1">Ferrochelatase</fullName>
        <ecNumber evidence="1">4.98.1.1</ecNumber>
    </recommendedName>
    <alternativeName>
        <fullName evidence="1">Heme synthase</fullName>
    </alternativeName>
    <alternativeName>
        <fullName evidence="1">Protoheme ferro-lyase</fullName>
    </alternativeName>
</protein>
<keyword id="KW-0963">Cytoplasm</keyword>
<keyword id="KW-0350">Heme biosynthesis</keyword>
<keyword id="KW-0408">Iron</keyword>
<keyword id="KW-0456">Lyase</keyword>
<keyword id="KW-0479">Metal-binding</keyword>
<keyword id="KW-0627">Porphyrin biosynthesis</keyword>
<accession>B8HK77</accession>
<proteinExistence type="inferred from homology"/>
<dbReference type="EC" id="4.98.1.1" evidence="1"/>
<dbReference type="EMBL" id="CP001344">
    <property type="protein sequence ID" value="ACL46827.1"/>
    <property type="molecule type" value="Genomic_DNA"/>
</dbReference>
<dbReference type="SMR" id="B8HK77"/>
<dbReference type="STRING" id="395961.Cyan7425_4517"/>
<dbReference type="KEGG" id="cyn:Cyan7425_4517"/>
<dbReference type="eggNOG" id="COG0276">
    <property type="taxonomic scope" value="Bacteria"/>
</dbReference>
<dbReference type="HOGENOM" id="CLU_018884_4_1_3"/>
<dbReference type="OrthoDB" id="9809741at2"/>
<dbReference type="UniPathway" id="UPA00252">
    <property type="reaction ID" value="UER00325"/>
</dbReference>
<dbReference type="GO" id="GO:0005737">
    <property type="term" value="C:cytoplasm"/>
    <property type="evidence" value="ECO:0007669"/>
    <property type="project" value="UniProtKB-SubCell"/>
</dbReference>
<dbReference type="GO" id="GO:0004325">
    <property type="term" value="F:ferrochelatase activity"/>
    <property type="evidence" value="ECO:0007669"/>
    <property type="project" value="UniProtKB-UniRule"/>
</dbReference>
<dbReference type="GO" id="GO:0046872">
    <property type="term" value="F:metal ion binding"/>
    <property type="evidence" value="ECO:0007669"/>
    <property type="project" value="UniProtKB-KW"/>
</dbReference>
<dbReference type="GO" id="GO:0006783">
    <property type="term" value="P:heme biosynthetic process"/>
    <property type="evidence" value="ECO:0007669"/>
    <property type="project" value="UniProtKB-UniRule"/>
</dbReference>
<dbReference type="CDD" id="cd00419">
    <property type="entry name" value="Ferrochelatase_C"/>
    <property type="match status" value="1"/>
</dbReference>
<dbReference type="CDD" id="cd03411">
    <property type="entry name" value="Ferrochelatase_N"/>
    <property type="match status" value="1"/>
</dbReference>
<dbReference type="FunFam" id="3.40.50.1400:FF:000006">
    <property type="entry name" value="Ferrochelatase"/>
    <property type="match status" value="1"/>
</dbReference>
<dbReference type="Gene3D" id="3.40.50.1400">
    <property type="match status" value="2"/>
</dbReference>
<dbReference type="HAMAP" id="MF_00323">
    <property type="entry name" value="Ferrochelatase"/>
    <property type="match status" value="1"/>
</dbReference>
<dbReference type="InterPro" id="IPR001015">
    <property type="entry name" value="Ferrochelatase"/>
</dbReference>
<dbReference type="InterPro" id="IPR019772">
    <property type="entry name" value="Ferrochelatase_AS"/>
</dbReference>
<dbReference type="InterPro" id="IPR033644">
    <property type="entry name" value="Ferrochelatase_C"/>
</dbReference>
<dbReference type="InterPro" id="IPR033659">
    <property type="entry name" value="Ferrochelatase_N"/>
</dbReference>
<dbReference type="NCBIfam" id="TIGR00109">
    <property type="entry name" value="hemH"/>
    <property type="match status" value="1"/>
</dbReference>
<dbReference type="PANTHER" id="PTHR11108">
    <property type="entry name" value="FERROCHELATASE"/>
    <property type="match status" value="1"/>
</dbReference>
<dbReference type="PANTHER" id="PTHR11108:SF1">
    <property type="entry name" value="FERROCHELATASE, MITOCHONDRIAL"/>
    <property type="match status" value="1"/>
</dbReference>
<dbReference type="Pfam" id="PF00762">
    <property type="entry name" value="Ferrochelatase"/>
    <property type="match status" value="1"/>
</dbReference>
<dbReference type="SUPFAM" id="SSF53800">
    <property type="entry name" value="Chelatase"/>
    <property type="match status" value="1"/>
</dbReference>
<dbReference type="SUPFAM" id="SSF103511">
    <property type="entry name" value="Chlorophyll a-b binding protein"/>
    <property type="match status" value="1"/>
</dbReference>
<dbReference type="PROSITE" id="PS00534">
    <property type="entry name" value="FERROCHELATASE"/>
    <property type="match status" value="1"/>
</dbReference>
<name>HEMH_CYAP4</name>
<sequence>MGRIGVLLLNLGGPDQLEDVRPFLYNLFSDPEIIRLPFTWLQKPLAWLISTTRARKSQQNYRLIGGGSPLRRITEEQGKALQAHLASQGQDIQVYIGMRYWHPFTEEAIAAIKQDGITRLVILPLYPQFSISTSGSSFRLLEDLWQRDPQLQAIDYTVIPSWYDRPGYTQAMAELLREELDHFAEPDRVTIFFSAHGVPLSYVTEAGDPYQAEIEGCTALIMQALNRPNPHVLAYQSRVGPVEWLKPYTEEVIPELASQGVNELVVVPISFISEHIETLQEIDMEYRELAEEAGIEHFRRVPALNTHPLFIADLSQLVLEALQGPSRKFDQVVRPQKQVKLYPQERWEWGMTSAAERWNGRLAMLGFLALLLELITGRGPLHLVGLL</sequence>
<feature type="chain" id="PRO_1000189982" description="Ferrochelatase">
    <location>
        <begin position="1"/>
        <end position="387"/>
    </location>
</feature>
<feature type="binding site" evidence="1">
    <location>
        <position position="196"/>
    </location>
    <ligand>
        <name>Fe cation</name>
        <dbReference type="ChEBI" id="CHEBI:24875"/>
    </ligand>
</feature>
<feature type="binding site" evidence="1">
    <location>
        <position position="277"/>
    </location>
    <ligand>
        <name>Fe cation</name>
        <dbReference type="ChEBI" id="CHEBI:24875"/>
    </ligand>
</feature>